<keyword id="KW-0963">Cytoplasm</keyword>
<keyword id="KW-0342">GTP-binding</keyword>
<keyword id="KW-0396">Initiation factor</keyword>
<keyword id="KW-0547">Nucleotide-binding</keyword>
<keyword id="KW-0648">Protein biosynthesis</keyword>
<comment type="function">
    <text evidence="2">One of the essential components for the initiation of protein synthesis. Protects formylmethionyl-tRNA from spontaneous hydrolysis and promotes its binding to the 30S ribosomal subunits. Also involved in the hydrolysis of GTP during the formation of the 70S ribosomal complex.</text>
</comment>
<comment type="subcellular location">
    <subcellularLocation>
        <location evidence="2">Cytoplasm</location>
    </subcellularLocation>
</comment>
<comment type="similarity">
    <text evidence="2">Belongs to the TRAFAC class translation factor GTPase superfamily. Classic translation factor GTPase family. IF-2 subfamily.</text>
</comment>
<proteinExistence type="inferred from homology"/>
<dbReference type="EMBL" id="AE017198">
    <property type="protein sequence ID" value="AAS09255.1"/>
    <property type="molecule type" value="Genomic_DNA"/>
</dbReference>
<dbReference type="RefSeq" id="WP_004897131.1">
    <property type="nucleotide sequence ID" value="NC_005362.1"/>
</dbReference>
<dbReference type="SMR" id="Q74IS8"/>
<dbReference type="GeneID" id="83570186"/>
<dbReference type="KEGG" id="ljo:LJ_1487"/>
<dbReference type="eggNOG" id="COG0532">
    <property type="taxonomic scope" value="Bacteria"/>
</dbReference>
<dbReference type="HOGENOM" id="CLU_006301_5_0_9"/>
<dbReference type="Proteomes" id="UP000000581">
    <property type="component" value="Chromosome"/>
</dbReference>
<dbReference type="GO" id="GO:0005829">
    <property type="term" value="C:cytosol"/>
    <property type="evidence" value="ECO:0007669"/>
    <property type="project" value="TreeGrafter"/>
</dbReference>
<dbReference type="GO" id="GO:0005525">
    <property type="term" value="F:GTP binding"/>
    <property type="evidence" value="ECO:0007669"/>
    <property type="project" value="UniProtKB-KW"/>
</dbReference>
<dbReference type="GO" id="GO:0003924">
    <property type="term" value="F:GTPase activity"/>
    <property type="evidence" value="ECO:0007669"/>
    <property type="project" value="UniProtKB-UniRule"/>
</dbReference>
<dbReference type="GO" id="GO:0003743">
    <property type="term" value="F:translation initiation factor activity"/>
    <property type="evidence" value="ECO:0007669"/>
    <property type="project" value="UniProtKB-UniRule"/>
</dbReference>
<dbReference type="CDD" id="cd01887">
    <property type="entry name" value="IF2_eIF5B"/>
    <property type="match status" value="1"/>
</dbReference>
<dbReference type="CDD" id="cd03702">
    <property type="entry name" value="IF2_mtIF2_II"/>
    <property type="match status" value="1"/>
</dbReference>
<dbReference type="CDD" id="cd03692">
    <property type="entry name" value="mtIF2_IVc"/>
    <property type="match status" value="1"/>
</dbReference>
<dbReference type="FunFam" id="2.40.30.10:FF:000007">
    <property type="entry name" value="Translation initiation factor IF-2"/>
    <property type="match status" value="1"/>
</dbReference>
<dbReference type="FunFam" id="2.40.30.10:FF:000008">
    <property type="entry name" value="Translation initiation factor IF-2"/>
    <property type="match status" value="1"/>
</dbReference>
<dbReference type="FunFam" id="3.40.50.10050:FF:000001">
    <property type="entry name" value="Translation initiation factor IF-2"/>
    <property type="match status" value="1"/>
</dbReference>
<dbReference type="FunFam" id="3.40.50.300:FF:000019">
    <property type="entry name" value="Translation initiation factor IF-2"/>
    <property type="match status" value="1"/>
</dbReference>
<dbReference type="Gene3D" id="1.10.10.2480">
    <property type="match status" value="1"/>
</dbReference>
<dbReference type="Gene3D" id="3.40.50.300">
    <property type="entry name" value="P-loop containing nucleotide triphosphate hydrolases"/>
    <property type="match status" value="1"/>
</dbReference>
<dbReference type="Gene3D" id="2.40.30.10">
    <property type="entry name" value="Translation factors"/>
    <property type="match status" value="2"/>
</dbReference>
<dbReference type="Gene3D" id="3.40.50.10050">
    <property type="entry name" value="Translation initiation factor IF- 2, domain 3"/>
    <property type="match status" value="1"/>
</dbReference>
<dbReference type="HAMAP" id="MF_00100_B">
    <property type="entry name" value="IF_2_B"/>
    <property type="match status" value="1"/>
</dbReference>
<dbReference type="InterPro" id="IPR053905">
    <property type="entry name" value="EF-G-like_DII"/>
</dbReference>
<dbReference type="InterPro" id="IPR044145">
    <property type="entry name" value="IF2_II"/>
</dbReference>
<dbReference type="InterPro" id="IPR006847">
    <property type="entry name" value="IF2_N"/>
</dbReference>
<dbReference type="InterPro" id="IPR027417">
    <property type="entry name" value="P-loop_NTPase"/>
</dbReference>
<dbReference type="InterPro" id="IPR005225">
    <property type="entry name" value="Small_GTP-bd"/>
</dbReference>
<dbReference type="InterPro" id="IPR000795">
    <property type="entry name" value="T_Tr_GTP-bd_dom"/>
</dbReference>
<dbReference type="InterPro" id="IPR000178">
    <property type="entry name" value="TF_IF2_bacterial-like"/>
</dbReference>
<dbReference type="InterPro" id="IPR015760">
    <property type="entry name" value="TIF_IF2"/>
</dbReference>
<dbReference type="InterPro" id="IPR023115">
    <property type="entry name" value="TIF_IF2_dom3"/>
</dbReference>
<dbReference type="InterPro" id="IPR036925">
    <property type="entry name" value="TIF_IF2_dom3_sf"/>
</dbReference>
<dbReference type="InterPro" id="IPR009000">
    <property type="entry name" value="Transl_B-barrel_sf"/>
</dbReference>
<dbReference type="NCBIfam" id="TIGR00487">
    <property type="entry name" value="IF-2"/>
    <property type="match status" value="1"/>
</dbReference>
<dbReference type="NCBIfam" id="TIGR00231">
    <property type="entry name" value="small_GTP"/>
    <property type="match status" value="1"/>
</dbReference>
<dbReference type="PANTHER" id="PTHR43381:SF5">
    <property type="entry name" value="TR-TYPE G DOMAIN-CONTAINING PROTEIN"/>
    <property type="match status" value="1"/>
</dbReference>
<dbReference type="PANTHER" id="PTHR43381">
    <property type="entry name" value="TRANSLATION INITIATION FACTOR IF-2-RELATED"/>
    <property type="match status" value="1"/>
</dbReference>
<dbReference type="Pfam" id="PF22042">
    <property type="entry name" value="EF-G_D2"/>
    <property type="match status" value="1"/>
</dbReference>
<dbReference type="Pfam" id="PF00009">
    <property type="entry name" value="GTP_EFTU"/>
    <property type="match status" value="1"/>
</dbReference>
<dbReference type="Pfam" id="PF11987">
    <property type="entry name" value="IF-2"/>
    <property type="match status" value="1"/>
</dbReference>
<dbReference type="Pfam" id="PF04760">
    <property type="entry name" value="IF2_N"/>
    <property type="match status" value="2"/>
</dbReference>
<dbReference type="SUPFAM" id="SSF52156">
    <property type="entry name" value="Initiation factor IF2/eIF5b, domain 3"/>
    <property type="match status" value="1"/>
</dbReference>
<dbReference type="SUPFAM" id="SSF52540">
    <property type="entry name" value="P-loop containing nucleoside triphosphate hydrolases"/>
    <property type="match status" value="1"/>
</dbReference>
<dbReference type="SUPFAM" id="SSF50447">
    <property type="entry name" value="Translation proteins"/>
    <property type="match status" value="2"/>
</dbReference>
<dbReference type="PROSITE" id="PS51722">
    <property type="entry name" value="G_TR_2"/>
    <property type="match status" value="1"/>
</dbReference>
<dbReference type="PROSITE" id="PS01176">
    <property type="entry name" value="IF2"/>
    <property type="match status" value="1"/>
</dbReference>
<protein>
    <recommendedName>
        <fullName evidence="2">Translation initiation factor IF-2</fullName>
    </recommendedName>
</protein>
<name>IF2_LACJO</name>
<feature type="chain" id="PRO_0000228206" description="Translation initiation factor IF-2">
    <location>
        <begin position="1"/>
        <end position="880"/>
    </location>
</feature>
<feature type="domain" description="tr-type G">
    <location>
        <begin position="381"/>
        <end position="550"/>
    </location>
</feature>
<feature type="region of interest" description="Disordered" evidence="3">
    <location>
        <begin position="34"/>
        <end position="297"/>
    </location>
</feature>
<feature type="region of interest" description="G1" evidence="1">
    <location>
        <begin position="390"/>
        <end position="397"/>
    </location>
</feature>
<feature type="region of interest" description="G2" evidence="1">
    <location>
        <begin position="415"/>
        <end position="419"/>
    </location>
</feature>
<feature type="region of interest" description="G3" evidence="1">
    <location>
        <begin position="436"/>
        <end position="439"/>
    </location>
</feature>
<feature type="region of interest" description="G4" evidence="1">
    <location>
        <begin position="490"/>
        <end position="493"/>
    </location>
</feature>
<feature type="region of interest" description="G5" evidence="1">
    <location>
        <begin position="526"/>
        <end position="528"/>
    </location>
</feature>
<feature type="compositionally biased region" description="Basic and acidic residues" evidence="3">
    <location>
        <begin position="34"/>
        <end position="43"/>
    </location>
</feature>
<feature type="compositionally biased region" description="Basic and acidic residues" evidence="3">
    <location>
        <begin position="59"/>
        <end position="69"/>
    </location>
</feature>
<feature type="compositionally biased region" description="Basic and acidic residues" evidence="3">
    <location>
        <begin position="82"/>
        <end position="94"/>
    </location>
</feature>
<feature type="compositionally biased region" description="Basic and acidic residues" evidence="3">
    <location>
        <begin position="110"/>
        <end position="131"/>
    </location>
</feature>
<feature type="compositionally biased region" description="Basic and acidic residues" evidence="3">
    <location>
        <begin position="167"/>
        <end position="181"/>
    </location>
</feature>
<feature type="compositionally biased region" description="Basic and acidic residues" evidence="3">
    <location>
        <begin position="230"/>
        <end position="240"/>
    </location>
</feature>
<feature type="compositionally biased region" description="Basic and acidic residues" evidence="3">
    <location>
        <begin position="248"/>
        <end position="261"/>
    </location>
</feature>
<feature type="compositionally biased region" description="Basic residues" evidence="3">
    <location>
        <begin position="262"/>
        <end position="275"/>
    </location>
</feature>
<feature type="compositionally biased region" description="Basic and acidic residues" evidence="3">
    <location>
        <begin position="276"/>
        <end position="292"/>
    </location>
</feature>
<feature type="binding site" evidence="2">
    <location>
        <begin position="390"/>
        <end position="397"/>
    </location>
    <ligand>
        <name>GTP</name>
        <dbReference type="ChEBI" id="CHEBI:37565"/>
    </ligand>
</feature>
<feature type="binding site" evidence="2">
    <location>
        <begin position="436"/>
        <end position="440"/>
    </location>
    <ligand>
        <name>GTP</name>
        <dbReference type="ChEBI" id="CHEBI:37565"/>
    </ligand>
</feature>
<feature type="binding site" evidence="2">
    <location>
        <begin position="490"/>
        <end position="493"/>
    </location>
    <ligand>
        <name>GTP</name>
        <dbReference type="ChEBI" id="CHEBI:37565"/>
    </ligand>
</feature>
<sequence>MAKKRIYEVAKELDIENKIVVKKAQDLGFDVKSHMSSLDDKQVSKLVDSLKSTNTTPSTEKDSKNSSRKEKAKIKVSVGAIRRRDNKNEHDNRHGNNKHRNNNFKKQQNNRRENEDKKTTSAKPAARDLLNKFKKKQRAEASELNAQTEASRRKWHQEQNPQRSKVKKVENTRKPKEEKLEGAAAVKARVQASQKPVGPKIIKPSPARNKAKRPTVKKVEPIAPVVPAPQKEETKPTRKKDFTRKKREVPDYERERSEHSDKARRRRNKKNKRINQSKEVKKQPTQRKERPLPETLVYEEGMNAQDLGKLLHREPAEIVKKLFMLGVMTNQNQSLDKDTIELLAAEYGIEAEEKVHEDISDIDTLYTKEMEESKASKHQEKRPPVVTIMGHVDHGKTTLLDRLRHTNVSEHEAGGITQRIGAYQVRIDDRLITFLDTPGHAAFSNMRARGAEITDIVILVVAADDGVMPQTIEAIDHAKSAGVPIIVAVNKIDKPGANPDHVMEQLMKYGLVPEDWGGDTIFVKISAKTGKNVEELLQMILLQADVMELKADPDQKAIGTVIEARLDKGRGSVADILVQQGTLKVGDPIVVGDTFGRVRVMTNDKGRRVKKATPSTPVEITGLNDVPEAADKLVVFDDEKTARSVGEQRAKNALEKQRENVQHVTLDNLFDTMKKENMKEVDIVLKADVQGSAEALQQSLEKIEVEGVRVNIIHSGVGAINESDVTLAGASNAFIVGFNVRPTNTAKSQADSEGVDIRLYNIIYKVMDDVEAAMKGMLEPTYEEKVTGNLTVRETWKVSKIGTIAGAFVDNGYVTRDSGIRVIRDGIVKYDGKVASLKRFKDDVKEVKQGFDCGITIENFNDIKVDDQLEAYEMQEVPVK</sequence>
<accession>Q74IS8</accession>
<reference key="1">
    <citation type="journal article" date="2004" name="Proc. Natl. Acad. Sci. U.S.A.">
        <title>The genome sequence of the probiotic intestinal bacterium Lactobacillus johnsonii NCC 533.</title>
        <authorList>
            <person name="Pridmore R.D."/>
            <person name="Berger B."/>
            <person name="Desiere F."/>
            <person name="Vilanova D."/>
            <person name="Barretto C."/>
            <person name="Pittet A.-C."/>
            <person name="Zwahlen M.-C."/>
            <person name="Rouvet M."/>
            <person name="Altermann E."/>
            <person name="Barrangou R."/>
            <person name="Mollet B."/>
            <person name="Mercenier A."/>
            <person name="Klaenhammer T."/>
            <person name="Arigoni F."/>
            <person name="Schell M.A."/>
        </authorList>
    </citation>
    <scope>NUCLEOTIDE SEQUENCE [LARGE SCALE GENOMIC DNA]</scope>
    <source>
        <strain>CNCM I-1225 / La1 / NCC 533</strain>
    </source>
</reference>
<evidence type="ECO:0000250" key="1"/>
<evidence type="ECO:0000255" key="2">
    <source>
        <dbReference type="HAMAP-Rule" id="MF_00100"/>
    </source>
</evidence>
<evidence type="ECO:0000256" key="3">
    <source>
        <dbReference type="SAM" id="MobiDB-lite"/>
    </source>
</evidence>
<gene>
    <name evidence="2" type="primary">infB</name>
    <name type="ordered locus">LJ_1487</name>
</gene>
<organism>
    <name type="scientific">Lactobacillus johnsonii (strain CNCM I-12250 / La1 / NCC 533)</name>
    <dbReference type="NCBI Taxonomy" id="257314"/>
    <lineage>
        <taxon>Bacteria</taxon>
        <taxon>Bacillati</taxon>
        <taxon>Bacillota</taxon>
        <taxon>Bacilli</taxon>
        <taxon>Lactobacillales</taxon>
        <taxon>Lactobacillaceae</taxon>
        <taxon>Lactobacillus</taxon>
    </lineage>
</organism>